<sequence>MVIHKKIAVVDFGGQYAHLIASRIRRLGAYTEILSNEEPISNYQKYSGIILSGGPESVYEPNSPTVTTRIFDLGIPILGICYGHQLIMKLLGGVVERSGTGEYGPASLQLHGTNGNSILKNFVGGEQVWMNHADEVVKLPEGFSKIAFSKDCGYAVVANSSKKIFGIQFHAEVSHSEKGSVLLDNFIQICGVSKTWGIDQFLKEKIKEIQETVKQEQKIFMLVSGGVDSTVSYLLLCKALGAERVLGFLIDTGFMRKDEVVSLQKKLTFQNIHLTVRDESSLFYKSLKDKSDPEEKRKIVGNLFLEARDRAVKDLDLEYGDWLLGQGTIYPDTIESGGTKHSHTIKTHHNRVEAIQKLIEQGKVIEPIRDLYKDEVRDLGVLLGLESEWVGRHPFPGPGLVVRMLAVEKKGTDKDQLEIDSYLSTQDGLSGKILPIASVGVKGDRRSYANCVVLNDIETDWNTLDRVATHLSNRFSFINRVVLLPFESDLKKWNFQFTGMQLDKKCSDLLREADFTVESVIRKLGLYNKIWQMPVVLLPIGEKENEKSIVLRPVESQEAMTANFFRMERSVLQEIKIEVLKIPEIRYLFFDLTNKPPGTIEWE</sequence>
<dbReference type="EC" id="6.3.5.2"/>
<dbReference type="EMBL" id="AE010300">
    <property type="protein sequence ID" value="AAN49286.2"/>
    <property type="molecule type" value="Genomic_DNA"/>
</dbReference>
<dbReference type="RefSeq" id="NP_712268.2">
    <property type="nucleotide sequence ID" value="NC_004342.2"/>
</dbReference>
<dbReference type="RefSeq" id="WP_000234667.1">
    <property type="nucleotide sequence ID" value="NC_004342.2"/>
</dbReference>
<dbReference type="SMR" id="Q8F4F4"/>
<dbReference type="FunCoup" id="Q8F4F4">
    <property type="interactions" value="505"/>
</dbReference>
<dbReference type="STRING" id="189518.LA_2087"/>
<dbReference type="PaxDb" id="189518-LA_2087"/>
<dbReference type="EnsemblBacteria" id="AAN49286">
    <property type="protein sequence ID" value="AAN49286"/>
    <property type="gene ID" value="LA_2087"/>
</dbReference>
<dbReference type="GeneID" id="61141728"/>
<dbReference type="KEGG" id="lil:LA_2087"/>
<dbReference type="PATRIC" id="fig|189518.3.peg.2080"/>
<dbReference type="HOGENOM" id="CLU_014340_0_2_12"/>
<dbReference type="InParanoid" id="Q8F4F4"/>
<dbReference type="OrthoDB" id="9802219at2"/>
<dbReference type="UniPathway" id="UPA00189">
    <property type="reaction ID" value="UER00296"/>
</dbReference>
<dbReference type="Proteomes" id="UP000001408">
    <property type="component" value="Chromosome I"/>
</dbReference>
<dbReference type="GO" id="GO:0005829">
    <property type="term" value="C:cytosol"/>
    <property type="evidence" value="ECO:0000318"/>
    <property type="project" value="GO_Central"/>
</dbReference>
<dbReference type="GO" id="GO:0005524">
    <property type="term" value="F:ATP binding"/>
    <property type="evidence" value="ECO:0007669"/>
    <property type="project" value="UniProtKB-KW"/>
</dbReference>
<dbReference type="GO" id="GO:0003921">
    <property type="term" value="F:GMP synthase activity"/>
    <property type="evidence" value="ECO:0000318"/>
    <property type="project" value="GO_Central"/>
</dbReference>
<dbReference type="GO" id="GO:0006177">
    <property type="term" value="P:GMP biosynthetic process"/>
    <property type="evidence" value="ECO:0000318"/>
    <property type="project" value="GO_Central"/>
</dbReference>
<dbReference type="CDD" id="cd01742">
    <property type="entry name" value="GATase1_GMP_Synthase"/>
    <property type="match status" value="1"/>
</dbReference>
<dbReference type="CDD" id="cd01997">
    <property type="entry name" value="GMP_synthase_C"/>
    <property type="match status" value="1"/>
</dbReference>
<dbReference type="FunFam" id="3.40.50.620:FF:000044">
    <property type="entry name" value="GMP synthase [glutamine-hydrolyzing]"/>
    <property type="match status" value="1"/>
</dbReference>
<dbReference type="FunFam" id="3.40.50.880:FF:000047">
    <property type="entry name" value="GMP synthase [glutamine-hydrolyzing] subunit A"/>
    <property type="match status" value="1"/>
</dbReference>
<dbReference type="Gene3D" id="3.30.300.10">
    <property type="match status" value="2"/>
</dbReference>
<dbReference type="Gene3D" id="3.40.50.880">
    <property type="match status" value="1"/>
</dbReference>
<dbReference type="Gene3D" id="3.40.50.620">
    <property type="entry name" value="HUPs"/>
    <property type="match status" value="1"/>
</dbReference>
<dbReference type="InterPro" id="IPR029062">
    <property type="entry name" value="Class_I_gatase-like"/>
</dbReference>
<dbReference type="InterPro" id="IPR017926">
    <property type="entry name" value="GATASE"/>
</dbReference>
<dbReference type="InterPro" id="IPR001674">
    <property type="entry name" value="GMP_synth_C"/>
</dbReference>
<dbReference type="InterPro" id="IPR004739">
    <property type="entry name" value="GMP_synth_GATase"/>
</dbReference>
<dbReference type="InterPro" id="IPR025777">
    <property type="entry name" value="GMPS_ATP_PPase_dom"/>
</dbReference>
<dbReference type="InterPro" id="IPR022310">
    <property type="entry name" value="NAD/GMP_synthase"/>
</dbReference>
<dbReference type="InterPro" id="IPR014729">
    <property type="entry name" value="Rossmann-like_a/b/a_fold"/>
</dbReference>
<dbReference type="NCBIfam" id="TIGR00888">
    <property type="entry name" value="guaA_Nterm"/>
    <property type="match status" value="1"/>
</dbReference>
<dbReference type="NCBIfam" id="NF000848">
    <property type="entry name" value="PRK00074.1"/>
    <property type="match status" value="1"/>
</dbReference>
<dbReference type="PANTHER" id="PTHR11922:SF2">
    <property type="entry name" value="GMP SYNTHASE [GLUTAMINE-HYDROLYZING]"/>
    <property type="match status" value="1"/>
</dbReference>
<dbReference type="PANTHER" id="PTHR11922">
    <property type="entry name" value="GMP SYNTHASE-RELATED"/>
    <property type="match status" value="1"/>
</dbReference>
<dbReference type="Pfam" id="PF00117">
    <property type="entry name" value="GATase"/>
    <property type="match status" value="1"/>
</dbReference>
<dbReference type="Pfam" id="PF00958">
    <property type="entry name" value="GMP_synt_C"/>
    <property type="match status" value="1"/>
</dbReference>
<dbReference type="Pfam" id="PF02540">
    <property type="entry name" value="NAD_synthase"/>
    <property type="match status" value="1"/>
</dbReference>
<dbReference type="PRINTS" id="PR00097">
    <property type="entry name" value="ANTSNTHASEII"/>
</dbReference>
<dbReference type="PRINTS" id="PR00099">
    <property type="entry name" value="CPSGATASE"/>
</dbReference>
<dbReference type="PRINTS" id="PR00096">
    <property type="entry name" value="GATASE"/>
</dbReference>
<dbReference type="SUPFAM" id="SSF52402">
    <property type="entry name" value="Adenine nucleotide alpha hydrolases-like"/>
    <property type="match status" value="1"/>
</dbReference>
<dbReference type="SUPFAM" id="SSF52317">
    <property type="entry name" value="Class I glutamine amidotransferase-like"/>
    <property type="match status" value="1"/>
</dbReference>
<dbReference type="SUPFAM" id="SSF54810">
    <property type="entry name" value="GMP synthetase C-terminal dimerisation domain"/>
    <property type="match status" value="2"/>
</dbReference>
<dbReference type="PROSITE" id="PS51273">
    <property type="entry name" value="GATASE_TYPE_1"/>
    <property type="match status" value="1"/>
</dbReference>
<dbReference type="PROSITE" id="PS51553">
    <property type="entry name" value="GMPS_ATP_PPASE"/>
    <property type="match status" value="1"/>
</dbReference>
<reference key="1">
    <citation type="journal article" date="2003" name="Nature">
        <title>Unique physiological and pathogenic features of Leptospira interrogans revealed by whole-genome sequencing.</title>
        <authorList>
            <person name="Ren S.-X."/>
            <person name="Fu G."/>
            <person name="Jiang X.-G."/>
            <person name="Zeng R."/>
            <person name="Miao Y.-G."/>
            <person name="Xu H."/>
            <person name="Zhang Y.-X."/>
            <person name="Xiong H."/>
            <person name="Lu G."/>
            <person name="Lu L.-F."/>
            <person name="Jiang H.-Q."/>
            <person name="Jia J."/>
            <person name="Tu Y.-F."/>
            <person name="Jiang J.-X."/>
            <person name="Gu W.-Y."/>
            <person name="Zhang Y.-Q."/>
            <person name="Cai Z."/>
            <person name="Sheng H.-H."/>
            <person name="Yin H.-F."/>
            <person name="Zhang Y."/>
            <person name="Zhu G.-F."/>
            <person name="Wan M."/>
            <person name="Huang H.-L."/>
            <person name="Qian Z."/>
            <person name="Wang S.-Y."/>
            <person name="Ma W."/>
            <person name="Yao Z.-J."/>
            <person name="Shen Y."/>
            <person name="Qiang B.-Q."/>
            <person name="Xia Q.-C."/>
            <person name="Guo X.-K."/>
            <person name="Danchin A."/>
            <person name="Saint Girons I."/>
            <person name="Somerville R.L."/>
            <person name="Wen Y.-M."/>
            <person name="Shi M.-H."/>
            <person name="Chen Z."/>
            <person name="Xu J.-G."/>
            <person name="Zhao G.-P."/>
        </authorList>
    </citation>
    <scope>NUCLEOTIDE SEQUENCE [LARGE SCALE GENOMIC DNA]</scope>
    <source>
        <strain>56601</strain>
    </source>
</reference>
<keyword id="KW-0067">ATP-binding</keyword>
<keyword id="KW-0315">Glutamine amidotransferase</keyword>
<keyword id="KW-0332">GMP biosynthesis</keyword>
<keyword id="KW-0436">Ligase</keyword>
<keyword id="KW-0547">Nucleotide-binding</keyword>
<keyword id="KW-0658">Purine biosynthesis</keyword>
<keyword id="KW-1185">Reference proteome</keyword>
<feature type="chain" id="PRO_0000140142" description="Probable GMP synthase [glutamine-hydrolyzing]">
    <location>
        <begin position="1"/>
        <end position="603"/>
    </location>
</feature>
<feature type="domain" description="Glutamine amidotransferase type-1" evidence="2">
    <location>
        <begin position="6"/>
        <end position="195"/>
    </location>
</feature>
<feature type="domain" description="GMPS ATP-PPase" evidence="3">
    <location>
        <begin position="196"/>
        <end position="392"/>
    </location>
</feature>
<feature type="region of interest" description="Insert">
    <location>
        <begin position="432"/>
        <end position="505"/>
    </location>
</feature>
<feature type="active site" description="Nucleophile" evidence="2">
    <location>
        <position position="81"/>
    </location>
</feature>
<feature type="active site" evidence="2">
    <location>
        <position position="170"/>
    </location>
</feature>
<feature type="active site" evidence="2">
    <location>
        <position position="172"/>
    </location>
</feature>
<feature type="binding site" evidence="3">
    <location>
        <begin position="224"/>
        <end position="230"/>
    </location>
    <ligand>
        <name>ATP</name>
        <dbReference type="ChEBI" id="CHEBI:30616"/>
    </ligand>
</feature>
<organism>
    <name type="scientific">Leptospira interrogans serogroup Icterohaemorrhagiae serovar Lai (strain 56601)</name>
    <dbReference type="NCBI Taxonomy" id="189518"/>
    <lineage>
        <taxon>Bacteria</taxon>
        <taxon>Pseudomonadati</taxon>
        <taxon>Spirochaetota</taxon>
        <taxon>Spirochaetia</taxon>
        <taxon>Leptospirales</taxon>
        <taxon>Leptospiraceae</taxon>
        <taxon>Leptospira</taxon>
    </lineage>
</organism>
<protein>
    <recommendedName>
        <fullName>Probable GMP synthase [glutamine-hydrolyzing]</fullName>
        <ecNumber>6.3.5.2</ecNumber>
    </recommendedName>
    <alternativeName>
        <fullName>GMP synthetase</fullName>
    </alternativeName>
    <alternativeName>
        <fullName>Glutamine amidotransferase</fullName>
    </alternativeName>
</protein>
<accession>Q8F4F4</accession>
<comment type="function">
    <text evidence="1">Catalyzes the synthesis of GMP from XMP.</text>
</comment>
<comment type="catalytic activity">
    <reaction>
        <text>XMP + L-glutamine + ATP + H2O = GMP + L-glutamate + AMP + diphosphate + 2 H(+)</text>
        <dbReference type="Rhea" id="RHEA:11680"/>
        <dbReference type="ChEBI" id="CHEBI:15377"/>
        <dbReference type="ChEBI" id="CHEBI:15378"/>
        <dbReference type="ChEBI" id="CHEBI:29985"/>
        <dbReference type="ChEBI" id="CHEBI:30616"/>
        <dbReference type="ChEBI" id="CHEBI:33019"/>
        <dbReference type="ChEBI" id="CHEBI:57464"/>
        <dbReference type="ChEBI" id="CHEBI:58115"/>
        <dbReference type="ChEBI" id="CHEBI:58359"/>
        <dbReference type="ChEBI" id="CHEBI:456215"/>
        <dbReference type="EC" id="6.3.5.2"/>
    </reaction>
</comment>
<comment type="pathway">
    <text>Purine metabolism; GMP biosynthesis; GMP from XMP (L-Gln route): step 1/1.</text>
</comment>
<comment type="subunit">
    <text evidence="1">Homodimer.</text>
</comment>
<evidence type="ECO:0000250" key="1"/>
<evidence type="ECO:0000255" key="2">
    <source>
        <dbReference type="PROSITE-ProRule" id="PRU00605"/>
    </source>
</evidence>
<evidence type="ECO:0000255" key="3">
    <source>
        <dbReference type="PROSITE-ProRule" id="PRU00886"/>
    </source>
</evidence>
<name>GUAA_LEPIN</name>
<proteinExistence type="inferred from homology"/>
<gene>
    <name type="primary">guaA</name>
    <name type="ordered locus">LA_2087</name>
</gene>